<protein>
    <recommendedName>
        <fullName evidence="1">Acetyl-coenzyme A carboxylase carboxyl transferase subunit beta</fullName>
        <shortName evidence="1">ACCase subunit beta</shortName>
        <shortName evidence="1">Acetyl-CoA carboxylase carboxyltransferase subunit beta</shortName>
        <ecNumber evidence="1">2.1.3.15</ecNumber>
    </recommendedName>
</protein>
<keyword id="KW-0067">ATP-binding</keyword>
<keyword id="KW-0963">Cytoplasm</keyword>
<keyword id="KW-0275">Fatty acid biosynthesis</keyword>
<keyword id="KW-0276">Fatty acid metabolism</keyword>
<keyword id="KW-0444">Lipid biosynthesis</keyword>
<keyword id="KW-0443">Lipid metabolism</keyword>
<keyword id="KW-0479">Metal-binding</keyword>
<keyword id="KW-0547">Nucleotide-binding</keyword>
<keyword id="KW-0808">Transferase</keyword>
<keyword id="KW-0862">Zinc</keyword>
<keyword id="KW-0863">Zinc-finger</keyword>
<feature type="chain" id="PRO_0000389854" description="Acetyl-coenzyme A carboxylase carboxyl transferase subunit beta">
    <location>
        <begin position="1"/>
        <end position="285"/>
    </location>
</feature>
<feature type="domain" description="CoA carboxyltransferase N-terminal" evidence="2">
    <location>
        <begin position="29"/>
        <end position="285"/>
    </location>
</feature>
<feature type="zinc finger region" description="C4-type" evidence="1">
    <location>
        <begin position="33"/>
        <end position="55"/>
    </location>
</feature>
<feature type="binding site" evidence="1">
    <location>
        <position position="33"/>
    </location>
    <ligand>
        <name>Zn(2+)</name>
        <dbReference type="ChEBI" id="CHEBI:29105"/>
    </ligand>
</feature>
<feature type="binding site" evidence="1">
    <location>
        <position position="36"/>
    </location>
    <ligand>
        <name>Zn(2+)</name>
        <dbReference type="ChEBI" id="CHEBI:29105"/>
    </ligand>
</feature>
<feature type="binding site" evidence="1">
    <location>
        <position position="52"/>
    </location>
    <ligand>
        <name>Zn(2+)</name>
        <dbReference type="ChEBI" id="CHEBI:29105"/>
    </ligand>
</feature>
<feature type="binding site" evidence="1">
    <location>
        <position position="55"/>
    </location>
    <ligand>
        <name>Zn(2+)</name>
        <dbReference type="ChEBI" id="CHEBI:29105"/>
    </ligand>
</feature>
<name>ACCD_STAAM</name>
<accession>Q99TG2</accession>
<dbReference type="EC" id="2.1.3.15" evidence="1"/>
<dbReference type="EMBL" id="BA000017">
    <property type="protein sequence ID" value="BAB57863.1"/>
    <property type="molecule type" value="Genomic_DNA"/>
</dbReference>
<dbReference type="PIR" id="A89954">
    <property type="entry name" value="A89954"/>
</dbReference>
<dbReference type="RefSeq" id="WP_000471571.1">
    <property type="nucleotide sequence ID" value="NC_002758.2"/>
</dbReference>
<dbReference type="SMR" id="Q99TG2"/>
<dbReference type="KEGG" id="sav:SAV1701"/>
<dbReference type="HOGENOM" id="CLU_015486_1_0_9"/>
<dbReference type="PhylomeDB" id="Q99TG2"/>
<dbReference type="UniPathway" id="UPA00655">
    <property type="reaction ID" value="UER00711"/>
</dbReference>
<dbReference type="Proteomes" id="UP000002481">
    <property type="component" value="Chromosome"/>
</dbReference>
<dbReference type="GO" id="GO:0009317">
    <property type="term" value="C:acetyl-CoA carboxylase complex"/>
    <property type="evidence" value="ECO:0007669"/>
    <property type="project" value="InterPro"/>
</dbReference>
<dbReference type="GO" id="GO:0003989">
    <property type="term" value="F:acetyl-CoA carboxylase activity"/>
    <property type="evidence" value="ECO:0007669"/>
    <property type="project" value="InterPro"/>
</dbReference>
<dbReference type="GO" id="GO:0005524">
    <property type="term" value="F:ATP binding"/>
    <property type="evidence" value="ECO:0007669"/>
    <property type="project" value="UniProtKB-KW"/>
</dbReference>
<dbReference type="GO" id="GO:0016743">
    <property type="term" value="F:carboxyl- or carbamoyltransferase activity"/>
    <property type="evidence" value="ECO:0007669"/>
    <property type="project" value="UniProtKB-UniRule"/>
</dbReference>
<dbReference type="GO" id="GO:0008270">
    <property type="term" value="F:zinc ion binding"/>
    <property type="evidence" value="ECO:0007669"/>
    <property type="project" value="UniProtKB-UniRule"/>
</dbReference>
<dbReference type="GO" id="GO:0006633">
    <property type="term" value="P:fatty acid biosynthetic process"/>
    <property type="evidence" value="ECO:0007669"/>
    <property type="project" value="UniProtKB-KW"/>
</dbReference>
<dbReference type="GO" id="GO:2001295">
    <property type="term" value="P:malonyl-CoA biosynthetic process"/>
    <property type="evidence" value="ECO:0007669"/>
    <property type="project" value="UniProtKB-UniRule"/>
</dbReference>
<dbReference type="Gene3D" id="3.90.226.10">
    <property type="entry name" value="2-enoyl-CoA Hydratase, Chain A, domain 1"/>
    <property type="match status" value="1"/>
</dbReference>
<dbReference type="HAMAP" id="MF_01395">
    <property type="entry name" value="AcetylCoA_CT_beta"/>
    <property type="match status" value="1"/>
</dbReference>
<dbReference type="InterPro" id="IPR034733">
    <property type="entry name" value="AcCoA_carboxyl_beta"/>
</dbReference>
<dbReference type="InterPro" id="IPR000438">
    <property type="entry name" value="Acetyl_CoA_COase_Trfase_b_su"/>
</dbReference>
<dbReference type="InterPro" id="IPR029045">
    <property type="entry name" value="ClpP/crotonase-like_dom_sf"/>
</dbReference>
<dbReference type="InterPro" id="IPR011762">
    <property type="entry name" value="COA_CT_N"/>
</dbReference>
<dbReference type="InterPro" id="IPR041010">
    <property type="entry name" value="Znf-ACC"/>
</dbReference>
<dbReference type="NCBIfam" id="TIGR00515">
    <property type="entry name" value="accD"/>
    <property type="match status" value="1"/>
</dbReference>
<dbReference type="PANTHER" id="PTHR42995">
    <property type="entry name" value="ACETYL-COENZYME A CARBOXYLASE CARBOXYL TRANSFERASE SUBUNIT BETA, CHLOROPLASTIC"/>
    <property type="match status" value="1"/>
</dbReference>
<dbReference type="PANTHER" id="PTHR42995:SF5">
    <property type="entry name" value="ACETYL-COENZYME A CARBOXYLASE CARBOXYL TRANSFERASE SUBUNIT BETA, CHLOROPLASTIC"/>
    <property type="match status" value="1"/>
</dbReference>
<dbReference type="Pfam" id="PF01039">
    <property type="entry name" value="Carboxyl_trans"/>
    <property type="match status" value="1"/>
</dbReference>
<dbReference type="Pfam" id="PF17848">
    <property type="entry name" value="Zn_ribbon_ACC"/>
    <property type="match status" value="1"/>
</dbReference>
<dbReference type="PRINTS" id="PR01070">
    <property type="entry name" value="ACCCTRFRASEB"/>
</dbReference>
<dbReference type="SUPFAM" id="SSF52096">
    <property type="entry name" value="ClpP/crotonase"/>
    <property type="match status" value="1"/>
</dbReference>
<dbReference type="PROSITE" id="PS50980">
    <property type="entry name" value="COA_CT_NTER"/>
    <property type="match status" value="1"/>
</dbReference>
<evidence type="ECO:0000255" key="1">
    <source>
        <dbReference type="HAMAP-Rule" id="MF_01395"/>
    </source>
</evidence>
<evidence type="ECO:0000255" key="2">
    <source>
        <dbReference type="PROSITE-ProRule" id="PRU01136"/>
    </source>
</evidence>
<sequence length="285" mass="31872">MFKDFFNRTKKKKYLTVQDSKNNDVPAGIMTKCPKCKKIMYTKELAENLNVCFNCDHHIALTAYKRIEAISDEGSFTEFDKGMTSANPLDFPSYLEKIEKDQQKTGLKEAVVTGTAQLDGMKFGVAVMDSRFRMGSMGSVIGEKICRIIDYCTENRLPFILFSASGGARMQEGIISLMQMGKTSVSLKRHSDAGLLYISYLTHPTTGGVSASFASVGDINLSEPKALIGFAGRRVIEQTINEKLPDDFQTAEFLLEHGQLDKVVHRNDMRQTLSEILKIHQEVTK</sequence>
<comment type="function">
    <text evidence="1">Component of the acetyl coenzyme A carboxylase (ACC) complex. Biotin carboxylase (BC) catalyzes the carboxylation of biotin on its carrier protein (BCCP) and then the CO(2) group is transferred by the transcarboxylase to acetyl-CoA to form malonyl-CoA.</text>
</comment>
<comment type="catalytic activity">
    <reaction evidence="1">
        <text>N(6)-carboxybiotinyl-L-lysyl-[protein] + acetyl-CoA = N(6)-biotinyl-L-lysyl-[protein] + malonyl-CoA</text>
        <dbReference type="Rhea" id="RHEA:54728"/>
        <dbReference type="Rhea" id="RHEA-COMP:10505"/>
        <dbReference type="Rhea" id="RHEA-COMP:10506"/>
        <dbReference type="ChEBI" id="CHEBI:57288"/>
        <dbReference type="ChEBI" id="CHEBI:57384"/>
        <dbReference type="ChEBI" id="CHEBI:83144"/>
        <dbReference type="ChEBI" id="CHEBI:83145"/>
        <dbReference type="EC" id="2.1.3.15"/>
    </reaction>
</comment>
<comment type="cofactor">
    <cofactor evidence="1">
        <name>Zn(2+)</name>
        <dbReference type="ChEBI" id="CHEBI:29105"/>
    </cofactor>
    <text evidence="1">Binds 1 zinc ion per subunit.</text>
</comment>
<comment type="pathway">
    <text evidence="1">Lipid metabolism; malonyl-CoA biosynthesis; malonyl-CoA from acetyl-CoA: step 1/1.</text>
</comment>
<comment type="subunit">
    <text evidence="1">Acetyl-CoA carboxylase is a heterohexamer composed of biotin carboxyl carrier protein (AccB), biotin carboxylase (AccC) and two subunits each of ACCase subunit alpha (AccA) and ACCase subunit beta (AccD).</text>
</comment>
<comment type="subcellular location">
    <subcellularLocation>
        <location evidence="1">Cytoplasm</location>
    </subcellularLocation>
</comment>
<comment type="similarity">
    <text evidence="1">Belongs to the AccD/PCCB family.</text>
</comment>
<organism>
    <name type="scientific">Staphylococcus aureus (strain Mu50 / ATCC 700699)</name>
    <dbReference type="NCBI Taxonomy" id="158878"/>
    <lineage>
        <taxon>Bacteria</taxon>
        <taxon>Bacillati</taxon>
        <taxon>Bacillota</taxon>
        <taxon>Bacilli</taxon>
        <taxon>Bacillales</taxon>
        <taxon>Staphylococcaceae</taxon>
        <taxon>Staphylococcus</taxon>
    </lineage>
</organism>
<reference key="1">
    <citation type="journal article" date="2001" name="Lancet">
        <title>Whole genome sequencing of meticillin-resistant Staphylococcus aureus.</title>
        <authorList>
            <person name="Kuroda M."/>
            <person name="Ohta T."/>
            <person name="Uchiyama I."/>
            <person name="Baba T."/>
            <person name="Yuzawa H."/>
            <person name="Kobayashi I."/>
            <person name="Cui L."/>
            <person name="Oguchi A."/>
            <person name="Aoki K."/>
            <person name="Nagai Y."/>
            <person name="Lian J.-Q."/>
            <person name="Ito T."/>
            <person name="Kanamori M."/>
            <person name="Matsumaru H."/>
            <person name="Maruyama A."/>
            <person name="Murakami H."/>
            <person name="Hosoyama A."/>
            <person name="Mizutani-Ui Y."/>
            <person name="Takahashi N.K."/>
            <person name="Sawano T."/>
            <person name="Inoue R."/>
            <person name="Kaito C."/>
            <person name="Sekimizu K."/>
            <person name="Hirakawa H."/>
            <person name="Kuhara S."/>
            <person name="Goto S."/>
            <person name="Yabuzaki J."/>
            <person name="Kanehisa M."/>
            <person name="Yamashita A."/>
            <person name="Oshima K."/>
            <person name="Furuya K."/>
            <person name="Yoshino C."/>
            <person name="Shiba T."/>
            <person name="Hattori M."/>
            <person name="Ogasawara N."/>
            <person name="Hayashi H."/>
            <person name="Hiramatsu K."/>
        </authorList>
    </citation>
    <scope>NUCLEOTIDE SEQUENCE [LARGE SCALE GENOMIC DNA]</scope>
    <source>
        <strain>Mu50 / ATCC 700699</strain>
    </source>
</reference>
<proteinExistence type="inferred from homology"/>
<gene>
    <name evidence="1" type="primary">accD</name>
    <name type="ordered locus">SAV1701</name>
</gene>